<dbReference type="EC" id="2.4.99.28" evidence="1"/>
<dbReference type="EMBL" id="CP002456">
    <property type="protein sequence ID" value="ADU91255.1"/>
    <property type="molecule type" value="Genomic_DNA"/>
</dbReference>
<dbReference type="SMR" id="E8UEF9"/>
<dbReference type="STRING" id="937774.TEQUI_0308"/>
<dbReference type="KEGG" id="teq:TEQUI_0308"/>
<dbReference type="eggNOG" id="COG0772">
    <property type="taxonomic scope" value="Bacteria"/>
</dbReference>
<dbReference type="HOGENOM" id="CLU_029243_1_1_4"/>
<dbReference type="UniPathway" id="UPA00219"/>
<dbReference type="Proteomes" id="UP000007472">
    <property type="component" value="Chromosome"/>
</dbReference>
<dbReference type="GO" id="GO:0032153">
    <property type="term" value="C:cell division site"/>
    <property type="evidence" value="ECO:0007669"/>
    <property type="project" value="UniProtKB-UniRule"/>
</dbReference>
<dbReference type="GO" id="GO:0005886">
    <property type="term" value="C:plasma membrane"/>
    <property type="evidence" value="ECO:0007669"/>
    <property type="project" value="UniProtKB-SubCell"/>
</dbReference>
<dbReference type="GO" id="GO:0015648">
    <property type="term" value="F:lipid-linked peptidoglycan transporter activity"/>
    <property type="evidence" value="ECO:0007669"/>
    <property type="project" value="TreeGrafter"/>
</dbReference>
<dbReference type="GO" id="GO:0008955">
    <property type="term" value="F:peptidoglycan glycosyltransferase activity"/>
    <property type="evidence" value="ECO:0007669"/>
    <property type="project" value="UniProtKB-UniRule"/>
</dbReference>
<dbReference type="GO" id="GO:0071555">
    <property type="term" value="P:cell wall organization"/>
    <property type="evidence" value="ECO:0007669"/>
    <property type="project" value="UniProtKB-KW"/>
</dbReference>
<dbReference type="GO" id="GO:0043093">
    <property type="term" value="P:FtsZ-dependent cytokinesis"/>
    <property type="evidence" value="ECO:0007669"/>
    <property type="project" value="UniProtKB-UniRule"/>
</dbReference>
<dbReference type="GO" id="GO:0009252">
    <property type="term" value="P:peptidoglycan biosynthetic process"/>
    <property type="evidence" value="ECO:0007669"/>
    <property type="project" value="UniProtKB-UniRule"/>
</dbReference>
<dbReference type="GO" id="GO:0008360">
    <property type="term" value="P:regulation of cell shape"/>
    <property type="evidence" value="ECO:0007669"/>
    <property type="project" value="UniProtKB-KW"/>
</dbReference>
<dbReference type="HAMAP" id="MF_00913">
    <property type="entry name" value="PGT_FtsW_proteobact"/>
    <property type="match status" value="1"/>
</dbReference>
<dbReference type="InterPro" id="IPR018365">
    <property type="entry name" value="Cell_cycle_FtsW-rel_CS"/>
</dbReference>
<dbReference type="InterPro" id="IPR013437">
    <property type="entry name" value="FtsW"/>
</dbReference>
<dbReference type="InterPro" id="IPR001182">
    <property type="entry name" value="FtsW/RodA"/>
</dbReference>
<dbReference type="NCBIfam" id="TIGR02614">
    <property type="entry name" value="ftsW"/>
    <property type="match status" value="1"/>
</dbReference>
<dbReference type="PANTHER" id="PTHR30474">
    <property type="entry name" value="CELL CYCLE PROTEIN"/>
    <property type="match status" value="1"/>
</dbReference>
<dbReference type="PANTHER" id="PTHR30474:SF2">
    <property type="entry name" value="PEPTIDOGLYCAN GLYCOSYLTRANSFERASE FTSW-RELATED"/>
    <property type="match status" value="1"/>
</dbReference>
<dbReference type="Pfam" id="PF01098">
    <property type="entry name" value="FTSW_RODA_SPOVE"/>
    <property type="match status" value="1"/>
</dbReference>
<dbReference type="PROSITE" id="PS00428">
    <property type="entry name" value="FTSW_RODA_SPOVE"/>
    <property type="match status" value="1"/>
</dbReference>
<sequence>MGLIMVFSSSIALGDGPKYVNAGRYYFFSRQLIFILIGLFAMAFTFLMPMKFWDSKAFWGYCICFLLLALVLVPGIGREVNYAYRWIPIGPFNFQPSEFAKLTMIVFTSAYTVRKQKSIHGLKGFLPIIIYLGIICFLLINEPDLGATMVVVAIVMSILLLGGLGFALFSLLFLSAVLLVIAAILTAPWRMQRFFAYLDPFSQEHAQNTGYQLTHSLIAVGRGGFFGEGLGLSIEKLHYLPEAHTDFIMAVVGEELGFVGIFFVILLFVLLVRKGLNVGRQAIAMDRLFNGLVAQGVVVWFGVQAIVNLGVCFGVFPTKGLTLPFISYGGSSIVISLMAFGLLLRVDYENRCLMRGQKPLGIGASYA</sequence>
<proteinExistence type="inferred from homology"/>
<feature type="chain" id="PRO_0000415213" description="Probable peptidoglycan glycosyltransferase FtsW">
    <location>
        <begin position="1"/>
        <end position="367"/>
    </location>
</feature>
<feature type="transmembrane region" description="Helical" evidence="1">
    <location>
        <begin position="32"/>
        <end position="52"/>
    </location>
</feature>
<feature type="transmembrane region" description="Helical" evidence="1">
    <location>
        <begin position="57"/>
        <end position="77"/>
    </location>
</feature>
<feature type="transmembrane region" description="Helical" evidence="1">
    <location>
        <begin position="87"/>
        <end position="107"/>
    </location>
</feature>
<feature type="transmembrane region" description="Helical" evidence="1">
    <location>
        <begin position="119"/>
        <end position="139"/>
    </location>
</feature>
<feature type="transmembrane region" description="Helical" evidence="1">
    <location>
        <begin position="149"/>
        <end position="169"/>
    </location>
</feature>
<feature type="transmembrane region" description="Helical" evidence="1">
    <location>
        <begin position="171"/>
        <end position="191"/>
    </location>
</feature>
<feature type="transmembrane region" description="Helical" evidence="1">
    <location>
        <begin position="251"/>
        <end position="271"/>
    </location>
</feature>
<feature type="transmembrane region" description="Helical" evidence="1">
    <location>
        <begin position="296"/>
        <end position="316"/>
    </location>
</feature>
<feature type="transmembrane region" description="Helical" evidence="1">
    <location>
        <begin position="323"/>
        <end position="343"/>
    </location>
</feature>
<accession>E8UEF9</accession>
<gene>
    <name evidence="1" type="primary">ftsW</name>
    <name type="ordered locus">TEQUI_0308</name>
</gene>
<reference key="1">
    <citation type="journal article" date="2011" name="J. Bacteriol.">
        <title>Genome sequence of Taylorella equigenitalis MCE9, the causative agent of contagious equine metritis.</title>
        <authorList>
            <person name="Hebert L."/>
            <person name="Moumen B."/>
            <person name="Duquesne F."/>
            <person name="Breuil M.F."/>
            <person name="Laugier C."/>
            <person name="Batto J.M."/>
            <person name="Renault P."/>
            <person name="Petry S."/>
        </authorList>
    </citation>
    <scope>NUCLEOTIDE SEQUENCE [LARGE SCALE GENOMIC DNA]</scope>
    <source>
        <strain>MCE9</strain>
    </source>
</reference>
<organism>
    <name type="scientific">Taylorella equigenitalis (strain MCE9)</name>
    <dbReference type="NCBI Taxonomy" id="937774"/>
    <lineage>
        <taxon>Bacteria</taxon>
        <taxon>Pseudomonadati</taxon>
        <taxon>Pseudomonadota</taxon>
        <taxon>Betaproteobacteria</taxon>
        <taxon>Burkholderiales</taxon>
        <taxon>Alcaligenaceae</taxon>
        <taxon>Taylorella</taxon>
    </lineage>
</organism>
<evidence type="ECO:0000255" key="1">
    <source>
        <dbReference type="HAMAP-Rule" id="MF_00913"/>
    </source>
</evidence>
<keyword id="KW-0131">Cell cycle</keyword>
<keyword id="KW-0132">Cell division</keyword>
<keyword id="KW-0997">Cell inner membrane</keyword>
<keyword id="KW-1003">Cell membrane</keyword>
<keyword id="KW-0133">Cell shape</keyword>
<keyword id="KW-0961">Cell wall biogenesis/degradation</keyword>
<keyword id="KW-0328">Glycosyltransferase</keyword>
<keyword id="KW-0472">Membrane</keyword>
<keyword id="KW-0573">Peptidoglycan synthesis</keyword>
<keyword id="KW-0808">Transferase</keyword>
<keyword id="KW-0812">Transmembrane</keyword>
<keyword id="KW-1133">Transmembrane helix</keyword>
<comment type="function">
    <text evidence="1">Peptidoglycan polymerase that is essential for cell division.</text>
</comment>
<comment type="catalytic activity">
    <reaction evidence="1">
        <text>[GlcNAc-(1-&gt;4)-Mur2Ac(oyl-L-Ala-gamma-D-Glu-L-Lys-D-Ala-D-Ala)](n)-di-trans,octa-cis-undecaprenyl diphosphate + beta-D-GlcNAc-(1-&gt;4)-Mur2Ac(oyl-L-Ala-gamma-D-Glu-L-Lys-D-Ala-D-Ala)-di-trans,octa-cis-undecaprenyl diphosphate = [GlcNAc-(1-&gt;4)-Mur2Ac(oyl-L-Ala-gamma-D-Glu-L-Lys-D-Ala-D-Ala)](n+1)-di-trans,octa-cis-undecaprenyl diphosphate + di-trans,octa-cis-undecaprenyl diphosphate + H(+)</text>
        <dbReference type="Rhea" id="RHEA:23708"/>
        <dbReference type="Rhea" id="RHEA-COMP:9602"/>
        <dbReference type="Rhea" id="RHEA-COMP:9603"/>
        <dbReference type="ChEBI" id="CHEBI:15378"/>
        <dbReference type="ChEBI" id="CHEBI:58405"/>
        <dbReference type="ChEBI" id="CHEBI:60033"/>
        <dbReference type="ChEBI" id="CHEBI:78435"/>
        <dbReference type="EC" id="2.4.99.28"/>
    </reaction>
</comment>
<comment type="pathway">
    <text evidence="1">Cell wall biogenesis; peptidoglycan biosynthesis.</text>
</comment>
<comment type="subcellular location">
    <subcellularLocation>
        <location evidence="1">Cell inner membrane</location>
        <topology evidence="1">Multi-pass membrane protein</topology>
    </subcellularLocation>
    <text evidence="1">Localizes to the division septum.</text>
</comment>
<comment type="similarity">
    <text evidence="1">Belongs to the SEDS family. FtsW subfamily.</text>
</comment>
<protein>
    <recommendedName>
        <fullName evidence="1">Probable peptidoglycan glycosyltransferase FtsW</fullName>
        <shortName evidence="1">PGT</shortName>
        <ecNumber evidence="1">2.4.99.28</ecNumber>
    </recommendedName>
    <alternativeName>
        <fullName evidence="1">Cell division protein FtsW</fullName>
    </alternativeName>
    <alternativeName>
        <fullName evidence="1">Cell wall polymerase</fullName>
    </alternativeName>
    <alternativeName>
        <fullName evidence="1">Peptidoglycan polymerase</fullName>
        <shortName evidence="1">PG polymerase</shortName>
    </alternativeName>
</protein>
<name>FTSW_TAYEM</name>